<dbReference type="EMBL" id="L77117">
    <property type="protein sequence ID" value="AAB98849.1"/>
    <property type="molecule type" value="Genomic_DNA"/>
</dbReference>
<dbReference type="PIR" id="D64405">
    <property type="entry name" value="D64405"/>
</dbReference>
<dbReference type="RefSeq" id="WP_010870358.1">
    <property type="nucleotide sequence ID" value="NC_000909.1"/>
</dbReference>
<dbReference type="FunCoup" id="Q58254">
    <property type="interactions" value="15"/>
</dbReference>
<dbReference type="STRING" id="243232.MJ_0844"/>
<dbReference type="PaxDb" id="243232-MJ_0844"/>
<dbReference type="DNASU" id="1451732"/>
<dbReference type="EnsemblBacteria" id="AAB98849">
    <property type="protein sequence ID" value="AAB98849"/>
    <property type="gene ID" value="MJ_0844"/>
</dbReference>
<dbReference type="GeneID" id="1451732"/>
<dbReference type="KEGG" id="mja:MJ_0844"/>
<dbReference type="eggNOG" id="arCOG03225">
    <property type="taxonomic scope" value="Archaea"/>
</dbReference>
<dbReference type="HOGENOM" id="CLU_099719_0_0_2"/>
<dbReference type="InParanoid" id="Q58254"/>
<dbReference type="OrthoDB" id="113954at2157"/>
<dbReference type="PhylomeDB" id="Q58254"/>
<dbReference type="Proteomes" id="UP000000805">
    <property type="component" value="Chromosome"/>
</dbReference>
<dbReference type="GO" id="GO:0015948">
    <property type="term" value="P:methanogenesis"/>
    <property type="evidence" value="ECO:0007669"/>
    <property type="project" value="UniProtKB-KW"/>
</dbReference>
<dbReference type="InterPro" id="IPR007687">
    <property type="entry name" value="Me_CoM_Rdtase_prot-C"/>
</dbReference>
<dbReference type="InterPro" id="IPR026327">
    <property type="entry name" value="Me_CoM_Rdtase_prot-C-like"/>
</dbReference>
<dbReference type="NCBIfam" id="TIGR03264">
    <property type="entry name" value="met_CoM_red_C"/>
    <property type="match status" value="1"/>
</dbReference>
<dbReference type="Pfam" id="PF04609">
    <property type="entry name" value="MCR_C"/>
    <property type="match status" value="1"/>
</dbReference>
<dbReference type="PIRSF" id="PIRSF003137">
    <property type="entry name" value="McrC"/>
    <property type="match status" value="1"/>
</dbReference>
<comment type="subunit">
    <text evidence="1">MCR is composed of three subunits: alpha, beta, and gamma. The function of proteins C and D is not known (By similarity).</text>
</comment>
<organism>
    <name type="scientific">Methanocaldococcus jannaschii (strain ATCC 43067 / DSM 2661 / JAL-1 / JCM 10045 / NBRC 100440)</name>
    <name type="common">Methanococcus jannaschii</name>
    <dbReference type="NCBI Taxonomy" id="243232"/>
    <lineage>
        <taxon>Archaea</taxon>
        <taxon>Methanobacteriati</taxon>
        <taxon>Methanobacteriota</taxon>
        <taxon>Methanomada group</taxon>
        <taxon>Methanococci</taxon>
        <taxon>Methanococcales</taxon>
        <taxon>Methanocaldococcaceae</taxon>
        <taxon>Methanocaldococcus</taxon>
    </lineage>
</organism>
<gene>
    <name type="primary">mcrC</name>
    <name type="ordered locus">MJ0844</name>
</gene>
<keyword id="KW-0484">Methanogenesis</keyword>
<keyword id="KW-1185">Reference proteome</keyword>
<evidence type="ECO:0000250" key="1"/>
<accession>Q58254</accession>
<sequence>MPVGRREQIVDCRSVMGLGEGGGLAQRGTFAEALKNDVVVVAMSPGRRHITKPVCEITYGIREAGIQTSVLVLNAGSGIPHDAPRGALGSTFGIKPEEAEQINRHKLCVVHFGNVISHIVYKAGLLLKYVEIPTIIVCQAPVDMEDLAKYGIKTRDVMPLEPKTKGTVVDIVTGVIRGESCPQTKIDEVIRKIKLHLNLN</sequence>
<feature type="chain" id="PRO_0000147486" description="Methyl-coenzyme M reductase I operon protein C">
    <location>
        <begin position="1"/>
        <end position="200"/>
    </location>
</feature>
<protein>
    <recommendedName>
        <fullName>Methyl-coenzyme M reductase I operon protein C</fullName>
    </recommendedName>
</protein>
<proteinExistence type="inferred from homology"/>
<name>MCRC_METJA</name>
<reference key="1">
    <citation type="journal article" date="1996" name="Science">
        <title>Complete genome sequence of the methanogenic archaeon, Methanococcus jannaschii.</title>
        <authorList>
            <person name="Bult C.J."/>
            <person name="White O."/>
            <person name="Olsen G.J."/>
            <person name="Zhou L."/>
            <person name="Fleischmann R.D."/>
            <person name="Sutton G.G."/>
            <person name="Blake J.A."/>
            <person name="FitzGerald L.M."/>
            <person name="Clayton R.A."/>
            <person name="Gocayne J.D."/>
            <person name="Kerlavage A.R."/>
            <person name="Dougherty B.A."/>
            <person name="Tomb J.-F."/>
            <person name="Adams M.D."/>
            <person name="Reich C.I."/>
            <person name="Overbeek R."/>
            <person name="Kirkness E.F."/>
            <person name="Weinstock K.G."/>
            <person name="Merrick J.M."/>
            <person name="Glodek A."/>
            <person name="Scott J.L."/>
            <person name="Geoghagen N.S.M."/>
            <person name="Weidman J.F."/>
            <person name="Fuhrmann J.L."/>
            <person name="Nguyen D."/>
            <person name="Utterback T.R."/>
            <person name="Kelley J.M."/>
            <person name="Peterson J.D."/>
            <person name="Sadow P.W."/>
            <person name="Hanna M.C."/>
            <person name="Cotton M.D."/>
            <person name="Roberts K.M."/>
            <person name="Hurst M.A."/>
            <person name="Kaine B.P."/>
            <person name="Borodovsky M."/>
            <person name="Klenk H.-P."/>
            <person name="Fraser C.M."/>
            <person name="Smith H.O."/>
            <person name="Woese C.R."/>
            <person name="Venter J.C."/>
        </authorList>
    </citation>
    <scope>NUCLEOTIDE SEQUENCE [LARGE SCALE GENOMIC DNA]</scope>
    <source>
        <strain>ATCC 43067 / DSM 2661 / JAL-1 / JCM 10045 / NBRC 100440</strain>
    </source>
</reference>